<reference key="1">
    <citation type="journal article" date="2004" name="Nat. Genet.">
        <title>Evidence in the Legionella pneumophila genome for exploitation of host cell functions and high genome plasticity.</title>
        <authorList>
            <person name="Cazalet C."/>
            <person name="Rusniok C."/>
            <person name="Brueggemann H."/>
            <person name="Zidane N."/>
            <person name="Magnier A."/>
            <person name="Ma L."/>
            <person name="Tichit M."/>
            <person name="Jarraud S."/>
            <person name="Bouchier C."/>
            <person name="Vandenesch F."/>
            <person name="Kunst F."/>
            <person name="Etienne J."/>
            <person name="Glaser P."/>
            <person name="Buchrieser C."/>
        </authorList>
    </citation>
    <scope>NUCLEOTIDE SEQUENCE [LARGE SCALE GENOMIC DNA]</scope>
    <source>
        <strain>Lens</strain>
    </source>
</reference>
<keyword id="KW-0997">Cell inner membrane</keyword>
<keyword id="KW-1003">Cell membrane</keyword>
<keyword id="KW-0201">Cytochrome c-type biogenesis</keyword>
<keyword id="KW-0349">Heme</keyword>
<keyword id="KW-0408">Iron</keyword>
<keyword id="KW-0472">Membrane</keyword>
<keyword id="KW-0479">Metal-binding</keyword>
<keyword id="KW-0735">Signal-anchor</keyword>
<keyword id="KW-0812">Transmembrane</keyword>
<keyword id="KW-1133">Transmembrane helix</keyword>
<sequence length="143" mass="15721">MTPVRRRKLFILLFALSVLSAAAALVLYALRQNISLFYTPTQIVAGEAPAKHHIRVGGMVEANSIVRAKKGLAVQFKITDFENTIVVTYSGILPDLFREGQGIVAEGEVTDNHHFHATQVLAKHDANYMPPQVKSALADKVKQ</sequence>
<name>CCME_LEGPL</name>
<proteinExistence type="inferred from homology"/>
<accession>Q5WY48</accession>
<dbReference type="EMBL" id="CR628337">
    <property type="protein sequence ID" value="CAH15125.1"/>
    <property type="molecule type" value="Genomic_DNA"/>
</dbReference>
<dbReference type="RefSeq" id="WP_011215038.1">
    <property type="nucleotide sequence ID" value="NC_006369.1"/>
</dbReference>
<dbReference type="SMR" id="Q5WY48"/>
<dbReference type="KEGG" id="lpf:lpl0891"/>
<dbReference type="LegioList" id="lpl0891"/>
<dbReference type="HOGENOM" id="CLU_079503_1_1_6"/>
<dbReference type="Proteomes" id="UP000002517">
    <property type="component" value="Chromosome"/>
</dbReference>
<dbReference type="GO" id="GO:0005886">
    <property type="term" value="C:plasma membrane"/>
    <property type="evidence" value="ECO:0007669"/>
    <property type="project" value="UniProtKB-SubCell"/>
</dbReference>
<dbReference type="GO" id="GO:0020037">
    <property type="term" value="F:heme binding"/>
    <property type="evidence" value="ECO:0007669"/>
    <property type="project" value="InterPro"/>
</dbReference>
<dbReference type="GO" id="GO:0046872">
    <property type="term" value="F:metal ion binding"/>
    <property type="evidence" value="ECO:0007669"/>
    <property type="project" value="UniProtKB-KW"/>
</dbReference>
<dbReference type="GO" id="GO:0017004">
    <property type="term" value="P:cytochrome complex assembly"/>
    <property type="evidence" value="ECO:0007669"/>
    <property type="project" value="UniProtKB-KW"/>
</dbReference>
<dbReference type="FunFam" id="2.40.50.140:FF:000104">
    <property type="entry name" value="Cytochrome c-type biogenesis protein CcmE"/>
    <property type="match status" value="1"/>
</dbReference>
<dbReference type="Gene3D" id="2.40.50.140">
    <property type="entry name" value="Nucleic acid-binding proteins"/>
    <property type="match status" value="1"/>
</dbReference>
<dbReference type="HAMAP" id="MF_01959">
    <property type="entry name" value="CcmE"/>
    <property type="match status" value="1"/>
</dbReference>
<dbReference type="InterPro" id="IPR004329">
    <property type="entry name" value="CcmE"/>
</dbReference>
<dbReference type="InterPro" id="IPR036127">
    <property type="entry name" value="CcmE-like_sf"/>
</dbReference>
<dbReference type="InterPro" id="IPR012340">
    <property type="entry name" value="NA-bd_OB-fold"/>
</dbReference>
<dbReference type="NCBIfam" id="NF009727">
    <property type="entry name" value="PRK13254.1-1"/>
    <property type="match status" value="1"/>
</dbReference>
<dbReference type="NCBIfam" id="NF009729">
    <property type="entry name" value="PRK13254.1-3"/>
    <property type="match status" value="1"/>
</dbReference>
<dbReference type="NCBIfam" id="NF009731">
    <property type="entry name" value="PRK13254.1-5"/>
    <property type="match status" value="1"/>
</dbReference>
<dbReference type="PANTHER" id="PTHR34128">
    <property type="entry name" value="CYTOCHROME C-TYPE BIOGENESIS PROTEIN CCME HOMOLOG, MITOCHONDRIAL"/>
    <property type="match status" value="1"/>
</dbReference>
<dbReference type="PANTHER" id="PTHR34128:SF2">
    <property type="entry name" value="CYTOCHROME C-TYPE BIOGENESIS PROTEIN CCME HOMOLOG, MITOCHONDRIAL"/>
    <property type="match status" value="1"/>
</dbReference>
<dbReference type="Pfam" id="PF03100">
    <property type="entry name" value="CcmE"/>
    <property type="match status" value="1"/>
</dbReference>
<dbReference type="SUPFAM" id="SSF82093">
    <property type="entry name" value="Heme chaperone CcmE"/>
    <property type="match status" value="1"/>
</dbReference>
<feature type="chain" id="PRO_0000238817" description="Cytochrome c-type biogenesis protein CcmE">
    <location>
        <begin position="1"/>
        <end position="143"/>
    </location>
</feature>
<feature type="topological domain" description="Cytoplasmic" evidence="1">
    <location>
        <begin position="1"/>
        <end position="8"/>
    </location>
</feature>
<feature type="transmembrane region" description="Helical; Signal-anchor for type II membrane protein" evidence="1">
    <location>
        <begin position="9"/>
        <end position="29"/>
    </location>
</feature>
<feature type="topological domain" description="Periplasmic" evidence="1">
    <location>
        <begin position="30"/>
        <end position="143"/>
    </location>
</feature>
<feature type="binding site" description="covalent" evidence="1">
    <location>
        <position position="124"/>
    </location>
    <ligand>
        <name>heme</name>
        <dbReference type="ChEBI" id="CHEBI:30413"/>
    </ligand>
</feature>
<feature type="binding site" description="axial binding residue" evidence="1">
    <location>
        <position position="128"/>
    </location>
    <ligand>
        <name>heme</name>
        <dbReference type="ChEBI" id="CHEBI:30413"/>
    </ligand>
    <ligandPart>
        <name>Fe</name>
        <dbReference type="ChEBI" id="CHEBI:18248"/>
    </ligandPart>
</feature>
<gene>
    <name evidence="1" type="primary">ccmE</name>
    <name evidence="1" type="synonym">cycJ</name>
    <name type="ordered locus">lpl0891</name>
</gene>
<comment type="function">
    <text evidence="1">Heme chaperone required for the biogenesis of c-type cytochromes. Transiently binds heme delivered by CcmC and transfers the heme to apo-cytochromes in a process facilitated by CcmF and CcmH.</text>
</comment>
<comment type="subcellular location">
    <subcellularLocation>
        <location evidence="1">Cell inner membrane</location>
        <topology evidence="1">Single-pass type II membrane protein</topology>
        <orientation evidence="1">Periplasmic side</orientation>
    </subcellularLocation>
</comment>
<comment type="similarity">
    <text evidence="1">Belongs to the CcmE/CycJ family.</text>
</comment>
<protein>
    <recommendedName>
        <fullName evidence="1">Cytochrome c-type biogenesis protein CcmE</fullName>
    </recommendedName>
    <alternativeName>
        <fullName evidence="1">Cytochrome c maturation protein E</fullName>
    </alternativeName>
    <alternativeName>
        <fullName evidence="1">Heme chaperone CcmE</fullName>
    </alternativeName>
</protein>
<evidence type="ECO:0000255" key="1">
    <source>
        <dbReference type="HAMAP-Rule" id="MF_01959"/>
    </source>
</evidence>
<organism>
    <name type="scientific">Legionella pneumophila (strain Lens)</name>
    <dbReference type="NCBI Taxonomy" id="297245"/>
    <lineage>
        <taxon>Bacteria</taxon>
        <taxon>Pseudomonadati</taxon>
        <taxon>Pseudomonadota</taxon>
        <taxon>Gammaproteobacteria</taxon>
        <taxon>Legionellales</taxon>
        <taxon>Legionellaceae</taxon>
        <taxon>Legionella</taxon>
    </lineage>
</organism>